<dbReference type="EC" id="6.2.1.54" evidence="1"/>
<dbReference type="EMBL" id="CP000485">
    <property type="protein sequence ID" value="ABK84583.1"/>
    <property type="molecule type" value="Genomic_DNA"/>
</dbReference>
<dbReference type="RefSeq" id="WP_000770518.1">
    <property type="nucleotide sequence ID" value="NC_008600.1"/>
</dbReference>
<dbReference type="SMR" id="A0RBJ0"/>
<dbReference type="KEGG" id="btl:BALH_1231"/>
<dbReference type="HOGENOM" id="CLU_000022_2_12_9"/>
<dbReference type="UniPathway" id="UPA00556"/>
<dbReference type="GO" id="GO:0005737">
    <property type="term" value="C:cytoplasm"/>
    <property type="evidence" value="ECO:0007669"/>
    <property type="project" value="UniProtKB-SubCell"/>
</dbReference>
<dbReference type="GO" id="GO:0005524">
    <property type="term" value="F:ATP binding"/>
    <property type="evidence" value="ECO:0007669"/>
    <property type="project" value="UniProtKB-KW"/>
</dbReference>
<dbReference type="GO" id="GO:0047473">
    <property type="term" value="F:D-alanine [D-alanyl carrier protein] ligase activity"/>
    <property type="evidence" value="ECO:0007669"/>
    <property type="project" value="UniProtKB-UniRule"/>
</dbReference>
<dbReference type="GO" id="GO:0070395">
    <property type="term" value="P:lipoteichoic acid biosynthetic process"/>
    <property type="evidence" value="ECO:0007669"/>
    <property type="project" value="UniProtKB-UniRule"/>
</dbReference>
<dbReference type="CDD" id="cd05945">
    <property type="entry name" value="DltA"/>
    <property type="match status" value="1"/>
</dbReference>
<dbReference type="FunFam" id="3.30.300.30:FF:000012">
    <property type="entry name" value="D-alanine--D-alanyl carrier protein ligase"/>
    <property type="match status" value="1"/>
</dbReference>
<dbReference type="FunFam" id="3.40.50.12780:FF:000015">
    <property type="entry name" value="D-alanine--D-alanyl carrier protein ligase"/>
    <property type="match status" value="1"/>
</dbReference>
<dbReference type="Gene3D" id="3.30.300.30">
    <property type="match status" value="1"/>
</dbReference>
<dbReference type="Gene3D" id="3.40.50.12780">
    <property type="entry name" value="N-terminal domain of ligase-like"/>
    <property type="match status" value="1"/>
</dbReference>
<dbReference type="HAMAP" id="MF_00593">
    <property type="entry name" value="DltA"/>
    <property type="match status" value="1"/>
</dbReference>
<dbReference type="InterPro" id="IPR010071">
    <property type="entry name" value="AA_adenyl_dom"/>
</dbReference>
<dbReference type="InterPro" id="IPR025110">
    <property type="entry name" value="AMP-bd_C"/>
</dbReference>
<dbReference type="InterPro" id="IPR045851">
    <property type="entry name" value="AMP-bd_C_sf"/>
</dbReference>
<dbReference type="InterPro" id="IPR020845">
    <property type="entry name" value="AMP-binding_CS"/>
</dbReference>
<dbReference type="InterPro" id="IPR000873">
    <property type="entry name" value="AMP-dep_synth/lig_dom"/>
</dbReference>
<dbReference type="InterPro" id="IPR042099">
    <property type="entry name" value="ANL_N_sf"/>
</dbReference>
<dbReference type="InterPro" id="IPR010072">
    <property type="entry name" value="DltA"/>
</dbReference>
<dbReference type="InterPro" id="IPR044507">
    <property type="entry name" value="DltA-like"/>
</dbReference>
<dbReference type="NCBIfam" id="TIGR01733">
    <property type="entry name" value="AA-adenyl-dom"/>
    <property type="match status" value="1"/>
</dbReference>
<dbReference type="NCBIfam" id="TIGR01734">
    <property type="entry name" value="D-ala-DACP-lig"/>
    <property type="match status" value="1"/>
</dbReference>
<dbReference type="NCBIfam" id="NF003417">
    <property type="entry name" value="PRK04813.1"/>
    <property type="match status" value="1"/>
</dbReference>
<dbReference type="PANTHER" id="PTHR45398">
    <property type="match status" value="1"/>
</dbReference>
<dbReference type="PANTHER" id="PTHR45398:SF1">
    <property type="entry name" value="ENZYME, PUTATIVE (JCVI)-RELATED"/>
    <property type="match status" value="1"/>
</dbReference>
<dbReference type="Pfam" id="PF00501">
    <property type="entry name" value="AMP-binding"/>
    <property type="match status" value="1"/>
</dbReference>
<dbReference type="Pfam" id="PF13193">
    <property type="entry name" value="AMP-binding_C"/>
    <property type="match status" value="1"/>
</dbReference>
<dbReference type="SUPFAM" id="SSF56801">
    <property type="entry name" value="Acetyl-CoA synthetase-like"/>
    <property type="match status" value="1"/>
</dbReference>
<dbReference type="PROSITE" id="PS00455">
    <property type="entry name" value="AMP_BINDING"/>
    <property type="match status" value="1"/>
</dbReference>
<gene>
    <name evidence="1" type="primary">dltA</name>
    <name type="ordered locus">BALH_1231</name>
</gene>
<accession>A0RBJ0</accession>
<comment type="function">
    <text evidence="1">Catalyzes the first step in the D-alanylation of lipoteichoic acid (LTA), the activation of D-alanine and its transfer onto the D-alanyl carrier protein (Dcp) DltC. In an ATP-dependent two-step reaction, forms a high energy D-alanyl-AMP intermediate, followed by transfer of the D-alanyl residue as a thiol ester to the phosphopantheinyl prosthetic group of the Dcp. D-alanylation of LTA plays an important role in modulating the properties of the cell wall in Gram-positive bacteria, influencing the net charge of the cell wall.</text>
</comment>
<comment type="catalytic activity">
    <reaction evidence="1">
        <text>holo-[D-alanyl-carrier protein] + D-alanine + ATP = D-alanyl-[D-alanyl-carrier protein] + AMP + diphosphate</text>
        <dbReference type="Rhea" id="RHEA:55132"/>
        <dbReference type="Rhea" id="RHEA-COMP:14102"/>
        <dbReference type="Rhea" id="RHEA-COMP:14103"/>
        <dbReference type="ChEBI" id="CHEBI:30616"/>
        <dbReference type="ChEBI" id="CHEBI:33019"/>
        <dbReference type="ChEBI" id="CHEBI:57416"/>
        <dbReference type="ChEBI" id="CHEBI:64479"/>
        <dbReference type="ChEBI" id="CHEBI:138620"/>
        <dbReference type="ChEBI" id="CHEBI:456215"/>
        <dbReference type="EC" id="6.2.1.54"/>
    </reaction>
</comment>
<comment type="pathway">
    <text evidence="1">Cell wall biogenesis; lipoteichoic acid biosynthesis.</text>
</comment>
<comment type="subcellular location">
    <subcellularLocation>
        <location evidence="1">Cytoplasm</location>
    </subcellularLocation>
</comment>
<comment type="similarity">
    <text evidence="1">Belongs to the ATP-dependent AMP-binding enzyme family. DltA subfamily.</text>
</comment>
<name>DLTA_BACAH</name>
<sequence length="504" mass="56506">MKLLEQIEKWAIETPDQTAFVWRDAKITYKQLKEDSDALAHWISSEYPDDRSPIMVYGHMQPEMIINFLGCVKAGHAYIPVDLSIPADRVQRIAENSGAKLLLSAAAVTVTDLPVRIVSEDNLKDIFFTHKGNTPNPEHAVKGDENFYIIYTSGSTGNPKGVQITYNCLVSFTQWAVEDFNLQTGQVFLNQAPFSFDLSVMDIYPSLVTGGTLWAIDKDMIARPKDLFASLEQSDIQVWTSTPSFAEMCLMEASFSESMLPNMKTFLFCGEVLPNEVARKLIERFPKATIMNTYGPTEATVAVTGIHVTEEVLDQYKSLPVGYCKSDCRLLIMKEDGTIAPDGEKGEIVIVGPSVSVGYLGSPELTEKAFTMIDGERAYKTGDAGYVENGLLFYNGRLDFQIKLHGYRMELEEIEHHLRACSYVEGAVIVPIKKGEKYDYLLAVVVPGEHSFEKEFKLTSAIKKELNERLPNYMIPRKFMYQSSIPMTPNGKVDRKKLLSEVTA</sequence>
<keyword id="KW-0067">ATP-binding</keyword>
<keyword id="KW-0963">Cytoplasm</keyword>
<keyword id="KW-0436">Ligase</keyword>
<keyword id="KW-0547">Nucleotide-binding</keyword>
<protein>
    <recommendedName>
        <fullName evidence="1">D-alanine--D-alanyl carrier protein ligase</fullName>
        <shortName evidence="1">DCL</shortName>
        <ecNumber evidence="1">6.2.1.54</ecNumber>
    </recommendedName>
    <alternativeName>
        <fullName evidence="1">D-alanine--poly(phosphoribitol) ligase subunit 1</fullName>
    </alternativeName>
    <alternativeName>
        <fullName evidence="1">D-alanine-activating enzyme</fullName>
        <shortName evidence="1">DAE</shortName>
    </alternativeName>
</protein>
<evidence type="ECO:0000255" key="1">
    <source>
        <dbReference type="HAMAP-Rule" id="MF_00593"/>
    </source>
</evidence>
<reference key="1">
    <citation type="journal article" date="2007" name="J. Bacteriol.">
        <title>The complete genome sequence of Bacillus thuringiensis Al Hakam.</title>
        <authorList>
            <person name="Challacombe J.F."/>
            <person name="Altherr M.R."/>
            <person name="Xie G."/>
            <person name="Bhotika S.S."/>
            <person name="Brown N."/>
            <person name="Bruce D."/>
            <person name="Campbell C.S."/>
            <person name="Campbell M.L."/>
            <person name="Chen J."/>
            <person name="Chertkov O."/>
            <person name="Cleland C."/>
            <person name="Dimitrijevic M."/>
            <person name="Doggett N.A."/>
            <person name="Fawcett J.J."/>
            <person name="Glavina T."/>
            <person name="Goodwin L.A."/>
            <person name="Green L.D."/>
            <person name="Han C.S."/>
            <person name="Hill K.K."/>
            <person name="Hitchcock P."/>
            <person name="Jackson P.J."/>
            <person name="Keim P."/>
            <person name="Kewalramani A.R."/>
            <person name="Longmire J."/>
            <person name="Lucas S."/>
            <person name="Malfatti S."/>
            <person name="Martinez D."/>
            <person name="McMurry K."/>
            <person name="Meincke L.J."/>
            <person name="Misra M."/>
            <person name="Moseman B.L."/>
            <person name="Mundt M."/>
            <person name="Munk A.C."/>
            <person name="Okinaka R.T."/>
            <person name="Parson-Quintana B."/>
            <person name="Reilly L.P."/>
            <person name="Richardson P."/>
            <person name="Robinson D.L."/>
            <person name="Saunders E."/>
            <person name="Tapia R."/>
            <person name="Tesmer J.G."/>
            <person name="Thayer N."/>
            <person name="Thompson L.S."/>
            <person name="Tice H."/>
            <person name="Ticknor L.O."/>
            <person name="Wills P.L."/>
            <person name="Gilna P."/>
            <person name="Brettin T.S."/>
        </authorList>
    </citation>
    <scope>NUCLEOTIDE SEQUENCE [LARGE SCALE GENOMIC DNA]</scope>
    <source>
        <strain>Al Hakam</strain>
    </source>
</reference>
<proteinExistence type="inferred from homology"/>
<feature type="chain" id="PRO_1000025523" description="D-alanine--D-alanyl carrier protein ligase">
    <location>
        <begin position="1"/>
        <end position="504"/>
    </location>
</feature>
<feature type="binding site" evidence="1">
    <location>
        <begin position="152"/>
        <end position="153"/>
    </location>
    <ligand>
        <name>ATP</name>
        <dbReference type="ChEBI" id="CHEBI:30616"/>
    </ligand>
</feature>
<feature type="binding site" evidence="1">
    <location>
        <position position="197"/>
    </location>
    <ligand>
        <name>D-alanine</name>
        <dbReference type="ChEBI" id="CHEBI:57416"/>
    </ligand>
</feature>
<feature type="binding site" evidence="1">
    <location>
        <begin position="292"/>
        <end position="297"/>
    </location>
    <ligand>
        <name>ATP</name>
        <dbReference type="ChEBI" id="CHEBI:30616"/>
    </ligand>
</feature>
<feature type="binding site" evidence="1">
    <location>
        <position position="301"/>
    </location>
    <ligand>
        <name>D-alanine</name>
        <dbReference type="ChEBI" id="CHEBI:57416"/>
    </ligand>
</feature>
<feature type="binding site" evidence="1">
    <location>
        <position position="383"/>
    </location>
    <ligand>
        <name>ATP</name>
        <dbReference type="ChEBI" id="CHEBI:30616"/>
    </ligand>
</feature>
<feature type="binding site" evidence="1">
    <location>
        <begin position="394"/>
        <end position="397"/>
    </location>
    <ligand>
        <name>ATP</name>
        <dbReference type="ChEBI" id="CHEBI:30616"/>
    </ligand>
</feature>
<feature type="binding site" evidence="1">
    <location>
        <position position="492"/>
    </location>
    <ligand>
        <name>ATP</name>
        <dbReference type="ChEBI" id="CHEBI:30616"/>
    </ligand>
</feature>
<feature type="binding site" evidence="1">
    <location>
        <position position="492"/>
    </location>
    <ligand>
        <name>D-alanine</name>
        <dbReference type="ChEBI" id="CHEBI:57416"/>
    </ligand>
</feature>
<organism>
    <name type="scientific">Bacillus thuringiensis (strain Al Hakam)</name>
    <dbReference type="NCBI Taxonomy" id="412694"/>
    <lineage>
        <taxon>Bacteria</taxon>
        <taxon>Bacillati</taxon>
        <taxon>Bacillota</taxon>
        <taxon>Bacilli</taxon>
        <taxon>Bacillales</taxon>
        <taxon>Bacillaceae</taxon>
        <taxon>Bacillus</taxon>
        <taxon>Bacillus cereus group</taxon>
    </lineage>
</organism>